<proteinExistence type="inferred from homology"/>
<keyword id="KW-0119">Carbohydrate metabolism</keyword>
<keyword id="KW-0963">Cytoplasm</keyword>
<keyword id="KW-0378">Hydrolase</keyword>
<keyword id="KW-0460">Magnesium</keyword>
<keyword id="KW-0479">Metal-binding</keyword>
<evidence type="ECO:0000255" key="1">
    <source>
        <dbReference type="HAMAP-Rule" id="MF_01855"/>
    </source>
</evidence>
<comment type="catalytic activity">
    <reaction evidence="1">
        <text>beta-D-fructose 1,6-bisphosphate + H2O = beta-D-fructose 6-phosphate + phosphate</text>
        <dbReference type="Rhea" id="RHEA:11064"/>
        <dbReference type="ChEBI" id="CHEBI:15377"/>
        <dbReference type="ChEBI" id="CHEBI:32966"/>
        <dbReference type="ChEBI" id="CHEBI:43474"/>
        <dbReference type="ChEBI" id="CHEBI:57634"/>
        <dbReference type="EC" id="3.1.3.11"/>
    </reaction>
</comment>
<comment type="cofactor">
    <cofactor evidence="1">
        <name>Mg(2+)</name>
        <dbReference type="ChEBI" id="CHEBI:18420"/>
    </cofactor>
    <text evidence="1">Binds 2 magnesium ions per subunit.</text>
</comment>
<comment type="pathway">
    <text evidence="1">Carbohydrate biosynthesis; gluconeogenesis.</text>
</comment>
<comment type="subunit">
    <text evidence="1">Homotetramer.</text>
</comment>
<comment type="subcellular location">
    <subcellularLocation>
        <location evidence="1">Cytoplasm</location>
    </subcellularLocation>
</comment>
<comment type="similarity">
    <text evidence="1">Belongs to the FBPase class 1 family.</text>
</comment>
<reference key="1">
    <citation type="submission" date="2006-08" db="EMBL/GenBank/DDBJ databases">
        <title>Complete sequence of chromosome 1 of Burkholderia cenocepacia HI2424.</title>
        <authorList>
            <person name="Copeland A."/>
            <person name="Lucas S."/>
            <person name="Lapidus A."/>
            <person name="Barry K."/>
            <person name="Detter J.C."/>
            <person name="Glavina del Rio T."/>
            <person name="Hammon N."/>
            <person name="Israni S."/>
            <person name="Pitluck S."/>
            <person name="Chain P."/>
            <person name="Malfatti S."/>
            <person name="Shin M."/>
            <person name="Vergez L."/>
            <person name="Schmutz J."/>
            <person name="Larimer F."/>
            <person name="Land M."/>
            <person name="Hauser L."/>
            <person name="Kyrpides N."/>
            <person name="Kim E."/>
            <person name="LiPuma J.J."/>
            <person name="Gonzalez C.F."/>
            <person name="Konstantinidis K."/>
            <person name="Tiedje J.M."/>
            <person name="Richardson P."/>
        </authorList>
    </citation>
    <scope>NUCLEOTIDE SEQUENCE [LARGE SCALE GENOMIC DNA]</scope>
    <source>
        <strain>HI2424</strain>
    </source>
</reference>
<dbReference type="EC" id="3.1.3.11" evidence="1"/>
<dbReference type="EMBL" id="CP000458">
    <property type="protein sequence ID" value="ABK07767.1"/>
    <property type="molecule type" value="Genomic_DNA"/>
</dbReference>
<dbReference type="RefSeq" id="WP_011544856.1">
    <property type="nucleotide sequence ID" value="NC_008542.1"/>
</dbReference>
<dbReference type="SMR" id="A0K5J0"/>
<dbReference type="KEGG" id="bch:Bcen2424_1014"/>
<dbReference type="HOGENOM" id="CLU_039977_0_0_4"/>
<dbReference type="UniPathway" id="UPA00138"/>
<dbReference type="GO" id="GO:0005829">
    <property type="term" value="C:cytosol"/>
    <property type="evidence" value="ECO:0007669"/>
    <property type="project" value="TreeGrafter"/>
</dbReference>
<dbReference type="GO" id="GO:0042132">
    <property type="term" value="F:fructose 1,6-bisphosphate 1-phosphatase activity"/>
    <property type="evidence" value="ECO:0007669"/>
    <property type="project" value="UniProtKB-UniRule"/>
</dbReference>
<dbReference type="GO" id="GO:0000287">
    <property type="term" value="F:magnesium ion binding"/>
    <property type="evidence" value="ECO:0007669"/>
    <property type="project" value="UniProtKB-UniRule"/>
</dbReference>
<dbReference type="GO" id="GO:0030388">
    <property type="term" value="P:fructose 1,6-bisphosphate metabolic process"/>
    <property type="evidence" value="ECO:0007669"/>
    <property type="project" value="TreeGrafter"/>
</dbReference>
<dbReference type="GO" id="GO:0006002">
    <property type="term" value="P:fructose 6-phosphate metabolic process"/>
    <property type="evidence" value="ECO:0007669"/>
    <property type="project" value="TreeGrafter"/>
</dbReference>
<dbReference type="GO" id="GO:0006000">
    <property type="term" value="P:fructose metabolic process"/>
    <property type="evidence" value="ECO:0007669"/>
    <property type="project" value="TreeGrafter"/>
</dbReference>
<dbReference type="GO" id="GO:0006094">
    <property type="term" value="P:gluconeogenesis"/>
    <property type="evidence" value="ECO:0007669"/>
    <property type="project" value="UniProtKB-UniRule"/>
</dbReference>
<dbReference type="GO" id="GO:0005986">
    <property type="term" value="P:sucrose biosynthetic process"/>
    <property type="evidence" value="ECO:0007669"/>
    <property type="project" value="TreeGrafter"/>
</dbReference>
<dbReference type="CDD" id="cd00354">
    <property type="entry name" value="FBPase"/>
    <property type="match status" value="1"/>
</dbReference>
<dbReference type="FunFam" id="3.30.540.10:FF:000006">
    <property type="entry name" value="Fructose-1,6-bisphosphatase class 1"/>
    <property type="match status" value="1"/>
</dbReference>
<dbReference type="FunFam" id="3.40.190.80:FF:000011">
    <property type="entry name" value="Fructose-1,6-bisphosphatase class 1"/>
    <property type="match status" value="1"/>
</dbReference>
<dbReference type="Gene3D" id="3.40.190.80">
    <property type="match status" value="1"/>
</dbReference>
<dbReference type="Gene3D" id="3.30.540.10">
    <property type="entry name" value="Fructose-1,6-Bisphosphatase, subunit A, domain 1"/>
    <property type="match status" value="1"/>
</dbReference>
<dbReference type="HAMAP" id="MF_01855">
    <property type="entry name" value="FBPase_class1"/>
    <property type="match status" value="1"/>
</dbReference>
<dbReference type="InterPro" id="IPR044015">
    <property type="entry name" value="FBPase_C_dom"/>
</dbReference>
<dbReference type="InterPro" id="IPR000146">
    <property type="entry name" value="FBPase_class-1"/>
</dbReference>
<dbReference type="InterPro" id="IPR033391">
    <property type="entry name" value="FBPase_N"/>
</dbReference>
<dbReference type="InterPro" id="IPR028343">
    <property type="entry name" value="FBPtase"/>
</dbReference>
<dbReference type="NCBIfam" id="NF006778">
    <property type="entry name" value="PRK09293.1-1"/>
    <property type="match status" value="1"/>
</dbReference>
<dbReference type="NCBIfam" id="NF006779">
    <property type="entry name" value="PRK09293.1-3"/>
    <property type="match status" value="1"/>
</dbReference>
<dbReference type="NCBIfam" id="NF006780">
    <property type="entry name" value="PRK09293.1-4"/>
    <property type="match status" value="1"/>
</dbReference>
<dbReference type="PANTHER" id="PTHR11556">
    <property type="entry name" value="FRUCTOSE-1,6-BISPHOSPHATASE-RELATED"/>
    <property type="match status" value="1"/>
</dbReference>
<dbReference type="PANTHER" id="PTHR11556:SF35">
    <property type="entry name" value="SEDOHEPTULOSE-1,7-BISPHOSPHATASE, CHLOROPLASTIC"/>
    <property type="match status" value="1"/>
</dbReference>
<dbReference type="Pfam" id="PF00316">
    <property type="entry name" value="FBPase"/>
    <property type="match status" value="1"/>
</dbReference>
<dbReference type="Pfam" id="PF18913">
    <property type="entry name" value="FBPase_C"/>
    <property type="match status" value="1"/>
</dbReference>
<dbReference type="PIRSF" id="PIRSF500210">
    <property type="entry name" value="FBPtase"/>
    <property type="match status" value="1"/>
</dbReference>
<dbReference type="PIRSF" id="PIRSF000904">
    <property type="entry name" value="FBPtase_SBPase"/>
    <property type="match status" value="1"/>
</dbReference>
<dbReference type="PRINTS" id="PR00115">
    <property type="entry name" value="F16BPHPHTASE"/>
</dbReference>
<dbReference type="SUPFAM" id="SSF56655">
    <property type="entry name" value="Carbohydrate phosphatase"/>
    <property type="match status" value="1"/>
</dbReference>
<accession>A0K5J0</accession>
<feature type="chain" id="PRO_0000364487" description="Fructose-1,6-bisphosphatase class 1">
    <location>
        <begin position="1"/>
        <end position="337"/>
    </location>
</feature>
<feature type="binding site" evidence="1">
    <location>
        <position position="94"/>
    </location>
    <ligand>
        <name>Mg(2+)</name>
        <dbReference type="ChEBI" id="CHEBI:18420"/>
        <label>1</label>
    </ligand>
</feature>
<feature type="binding site" evidence="1">
    <location>
        <position position="116"/>
    </location>
    <ligand>
        <name>Mg(2+)</name>
        <dbReference type="ChEBI" id="CHEBI:18420"/>
        <label>1</label>
    </ligand>
</feature>
<feature type="binding site" evidence="1">
    <location>
        <position position="116"/>
    </location>
    <ligand>
        <name>Mg(2+)</name>
        <dbReference type="ChEBI" id="CHEBI:18420"/>
        <label>2</label>
    </ligand>
</feature>
<feature type="binding site" evidence="1">
    <location>
        <position position="118"/>
    </location>
    <ligand>
        <name>Mg(2+)</name>
        <dbReference type="ChEBI" id="CHEBI:18420"/>
        <label>1</label>
    </ligand>
</feature>
<feature type="binding site" evidence="1">
    <location>
        <begin position="119"/>
        <end position="122"/>
    </location>
    <ligand>
        <name>substrate</name>
    </ligand>
</feature>
<feature type="binding site" evidence="1">
    <location>
        <position position="119"/>
    </location>
    <ligand>
        <name>Mg(2+)</name>
        <dbReference type="ChEBI" id="CHEBI:18420"/>
        <label>2</label>
    </ligand>
</feature>
<feature type="binding site" evidence="1">
    <location>
        <position position="210"/>
    </location>
    <ligand>
        <name>substrate</name>
    </ligand>
</feature>
<feature type="binding site" evidence="1">
    <location>
        <position position="276"/>
    </location>
    <ligand>
        <name>substrate</name>
    </ligand>
</feature>
<feature type="binding site" evidence="1">
    <location>
        <position position="282"/>
    </location>
    <ligand>
        <name>Mg(2+)</name>
        <dbReference type="ChEBI" id="CHEBI:18420"/>
        <label>2</label>
    </ligand>
</feature>
<protein>
    <recommendedName>
        <fullName evidence="1">Fructose-1,6-bisphosphatase class 1</fullName>
        <shortName evidence="1">FBPase class 1</shortName>
        <ecNumber evidence="1">3.1.3.11</ecNumber>
    </recommendedName>
    <alternativeName>
        <fullName evidence="1">D-fructose-1,6-bisphosphate 1-phosphohydrolase class 1</fullName>
    </alternativeName>
</protein>
<organism>
    <name type="scientific">Burkholderia cenocepacia (strain HI2424)</name>
    <dbReference type="NCBI Taxonomy" id="331272"/>
    <lineage>
        <taxon>Bacteria</taxon>
        <taxon>Pseudomonadati</taxon>
        <taxon>Pseudomonadota</taxon>
        <taxon>Betaproteobacteria</taxon>
        <taxon>Burkholderiales</taxon>
        <taxon>Burkholderiaceae</taxon>
        <taxon>Burkholderia</taxon>
        <taxon>Burkholderia cepacia complex</taxon>
    </lineage>
</organism>
<gene>
    <name evidence="1" type="primary">fbp</name>
    <name type="ordered locus">Bcen2424_1014</name>
</gene>
<name>F16PA_BURCH</name>
<sequence>MSIARRTTLSKFLIEQQRETNNLPADLRLLIEVVARACKAISYNVSKGALGDALGTAGSENVQGEVQKKLDILSNEILLDANEWGGNLAAMASEEMETFFPIPANYPRGEYLLVFDPLDGSSNIDVNVSIGTIFSVLRCPDGKQATEESFLQPGTEQVAAGYAVYGPQTVFVLTTGNGVNCFTLDREVGSWVLTQSNMQIPADTREYAINASNARHWYDPVKRYVDELNAGKDGPRGDNFNMRWIASMVADVHRILNRGGIFMYPADKRTPDRPGKLRLMYEANPMSFIVEQAGGAATTGTQRIMEVQPTGLHQRVPVFLGSKNEVKRVTGYHDEAK</sequence>